<organism>
    <name type="scientific">Bos taurus</name>
    <name type="common">Bovine</name>
    <dbReference type="NCBI Taxonomy" id="9913"/>
    <lineage>
        <taxon>Eukaryota</taxon>
        <taxon>Metazoa</taxon>
        <taxon>Chordata</taxon>
        <taxon>Craniata</taxon>
        <taxon>Vertebrata</taxon>
        <taxon>Euteleostomi</taxon>
        <taxon>Mammalia</taxon>
        <taxon>Eutheria</taxon>
        <taxon>Laurasiatheria</taxon>
        <taxon>Artiodactyla</taxon>
        <taxon>Ruminantia</taxon>
        <taxon>Pecora</taxon>
        <taxon>Bovidae</taxon>
        <taxon>Bovinae</taxon>
        <taxon>Bos</taxon>
    </lineage>
</organism>
<accession>P35605</accession>
<accession>A4IFE1</accession>
<dbReference type="EMBL" id="X72756">
    <property type="protein sequence ID" value="CAA51285.1"/>
    <property type="molecule type" value="mRNA"/>
</dbReference>
<dbReference type="EMBL" id="BC134537">
    <property type="protein sequence ID" value="AAI34538.1"/>
    <property type="molecule type" value="mRNA"/>
</dbReference>
<dbReference type="PIR" id="S35312">
    <property type="entry name" value="S35312"/>
</dbReference>
<dbReference type="RefSeq" id="NP_776706.2">
    <property type="nucleotide sequence ID" value="NM_174281.3"/>
</dbReference>
<dbReference type="SMR" id="P35605"/>
<dbReference type="BioGRID" id="159022">
    <property type="interactions" value="1"/>
</dbReference>
<dbReference type="FunCoup" id="P35605">
    <property type="interactions" value="3855"/>
</dbReference>
<dbReference type="IntAct" id="P35605">
    <property type="interactions" value="1"/>
</dbReference>
<dbReference type="MINT" id="P35605"/>
<dbReference type="STRING" id="9913.ENSBTAP00000068170"/>
<dbReference type="PaxDb" id="9913-ENSBTAP00000019767"/>
<dbReference type="PeptideAtlas" id="P35605"/>
<dbReference type="Ensembl" id="ENSBTAT00000090923.1">
    <property type="protein sequence ID" value="ENSBTAP00000092868.1"/>
    <property type="gene ID" value="ENSBTAG00000014843.6"/>
</dbReference>
<dbReference type="GeneID" id="281706"/>
<dbReference type="KEGG" id="bta:281706"/>
<dbReference type="CTD" id="9276"/>
<dbReference type="VEuPathDB" id="HostDB:ENSBTAG00000014843"/>
<dbReference type="VGNC" id="VGNC:27594">
    <property type="gene designation" value="COPB2"/>
</dbReference>
<dbReference type="eggNOG" id="KOG0276">
    <property type="taxonomic scope" value="Eukaryota"/>
</dbReference>
<dbReference type="GeneTree" id="ENSGT00900000141083"/>
<dbReference type="InParanoid" id="P35605"/>
<dbReference type="OMA" id="YVDYYPQ"/>
<dbReference type="OrthoDB" id="2150324at2759"/>
<dbReference type="Reactome" id="R-BTA-6807878">
    <property type="pathway name" value="COPI-mediated anterograde transport"/>
</dbReference>
<dbReference type="Reactome" id="R-BTA-6811434">
    <property type="pathway name" value="COPI-dependent Golgi-to-ER retrograde traffic"/>
</dbReference>
<dbReference type="Proteomes" id="UP000009136">
    <property type="component" value="Chromosome 1"/>
</dbReference>
<dbReference type="Bgee" id="ENSBTAG00000014843">
    <property type="expression patterns" value="Expressed in saliva-secreting gland and 108 other cell types or tissues"/>
</dbReference>
<dbReference type="GO" id="GO:0030126">
    <property type="term" value="C:COPI vesicle coat"/>
    <property type="evidence" value="ECO:0000314"/>
    <property type="project" value="UniProtKB"/>
</dbReference>
<dbReference type="GO" id="GO:0005829">
    <property type="term" value="C:cytosol"/>
    <property type="evidence" value="ECO:0007669"/>
    <property type="project" value="UniProtKB-SubCell"/>
</dbReference>
<dbReference type="GO" id="GO:0005794">
    <property type="term" value="C:Golgi apparatus"/>
    <property type="evidence" value="ECO:0000250"/>
    <property type="project" value="AgBase"/>
</dbReference>
<dbReference type="GO" id="GO:0000139">
    <property type="term" value="C:Golgi membrane"/>
    <property type="evidence" value="ECO:0000250"/>
    <property type="project" value="AgBase"/>
</dbReference>
<dbReference type="GO" id="GO:0005080">
    <property type="term" value="F:protein kinase C binding"/>
    <property type="evidence" value="ECO:0000250"/>
    <property type="project" value="AgBase"/>
</dbReference>
<dbReference type="GO" id="GO:0005198">
    <property type="term" value="F:structural molecule activity"/>
    <property type="evidence" value="ECO:0007669"/>
    <property type="project" value="InterPro"/>
</dbReference>
<dbReference type="GO" id="GO:0006888">
    <property type="term" value="P:endoplasmic reticulum to Golgi vesicle-mediated transport"/>
    <property type="evidence" value="ECO:0000318"/>
    <property type="project" value="GO_Central"/>
</dbReference>
<dbReference type="GO" id="GO:0006891">
    <property type="term" value="P:intra-Golgi vesicle-mediated transport"/>
    <property type="evidence" value="ECO:0000250"/>
    <property type="project" value="AgBase"/>
</dbReference>
<dbReference type="GO" id="GO:0006886">
    <property type="term" value="P:intracellular protein transport"/>
    <property type="evidence" value="ECO:0000318"/>
    <property type="project" value="GO_Central"/>
</dbReference>
<dbReference type="GO" id="GO:0006890">
    <property type="term" value="P:retrograde vesicle-mediated transport, Golgi to endoplasmic reticulum"/>
    <property type="evidence" value="ECO:0000318"/>
    <property type="project" value="GO_Central"/>
</dbReference>
<dbReference type="CDD" id="cd22947">
    <property type="entry name" value="Coatomer_WDAD_beta-like"/>
    <property type="match status" value="1"/>
</dbReference>
<dbReference type="CDD" id="cd00200">
    <property type="entry name" value="WD40"/>
    <property type="match status" value="1"/>
</dbReference>
<dbReference type="FunFam" id="1.25.40.470:FF:000001">
    <property type="entry name" value="Coatomer subunit beta"/>
    <property type="match status" value="1"/>
</dbReference>
<dbReference type="FunFam" id="2.130.10.10:FF:000008">
    <property type="entry name" value="Coatomer subunit beta"/>
    <property type="match status" value="1"/>
</dbReference>
<dbReference type="Gene3D" id="1.25.40.470">
    <property type="match status" value="1"/>
</dbReference>
<dbReference type="Gene3D" id="2.130.10.10">
    <property type="entry name" value="YVTN repeat-like/Quinoprotein amine dehydrogenase"/>
    <property type="match status" value="1"/>
</dbReference>
<dbReference type="InterPro" id="IPR006692">
    <property type="entry name" value="Beta-prop_COPA/B_2nd"/>
</dbReference>
<dbReference type="InterPro" id="IPR050844">
    <property type="entry name" value="Coatomer_complex_subunit"/>
</dbReference>
<dbReference type="InterPro" id="IPR016453">
    <property type="entry name" value="COPB2"/>
</dbReference>
<dbReference type="InterPro" id="IPR020472">
    <property type="entry name" value="G-protein_beta_WD-40_rep"/>
</dbReference>
<dbReference type="InterPro" id="IPR056176">
    <property type="entry name" value="TPR_COPA_B"/>
</dbReference>
<dbReference type="InterPro" id="IPR015943">
    <property type="entry name" value="WD40/YVTN_repeat-like_dom_sf"/>
</dbReference>
<dbReference type="InterPro" id="IPR036322">
    <property type="entry name" value="WD40_repeat_dom_sf"/>
</dbReference>
<dbReference type="InterPro" id="IPR001680">
    <property type="entry name" value="WD40_rpt"/>
</dbReference>
<dbReference type="PANTHER" id="PTHR19876">
    <property type="entry name" value="COATOMER"/>
    <property type="match status" value="1"/>
</dbReference>
<dbReference type="PANTHER" id="PTHR19876:SF2">
    <property type="entry name" value="COATOMER SUBUNIT BETA"/>
    <property type="match status" value="1"/>
</dbReference>
<dbReference type="Pfam" id="PF04053">
    <property type="entry name" value="B-prop_COPA_B_2nd"/>
    <property type="match status" value="1"/>
</dbReference>
<dbReference type="Pfam" id="PF23953">
    <property type="entry name" value="TPR_COPA_B"/>
    <property type="match status" value="1"/>
</dbReference>
<dbReference type="Pfam" id="PF00400">
    <property type="entry name" value="WD40"/>
    <property type="match status" value="6"/>
</dbReference>
<dbReference type="PIRSF" id="PIRSF005567">
    <property type="entry name" value="Coatomer_beta'_subunit"/>
    <property type="match status" value="1"/>
</dbReference>
<dbReference type="PRINTS" id="PR00320">
    <property type="entry name" value="GPROTEINBRPT"/>
</dbReference>
<dbReference type="SMART" id="SM00320">
    <property type="entry name" value="WD40"/>
    <property type="match status" value="6"/>
</dbReference>
<dbReference type="SUPFAM" id="SSF50978">
    <property type="entry name" value="WD40 repeat-like"/>
    <property type="match status" value="2"/>
</dbReference>
<dbReference type="PROSITE" id="PS50082">
    <property type="entry name" value="WD_REPEATS_2"/>
    <property type="match status" value="5"/>
</dbReference>
<dbReference type="PROSITE" id="PS50294">
    <property type="entry name" value="WD_REPEATS_REGION"/>
    <property type="match status" value="1"/>
</dbReference>
<keyword id="KW-0007">Acetylation</keyword>
<keyword id="KW-0175">Coiled coil</keyword>
<keyword id="KW-0963">Cytoplasm</keyword>
<keyword id="KW-0968">Cytoplasmic vesicle</keyword>
<keyword id="KW-0903">Direct protein sequencing</keyword>
<keyword id="KW-0931">ER-Golgi transport</keyword>
<keyword id="KW-0333">Golgi apparatus</keyword>
<keyword id="KW-0472">Membrane</keyword>
<keyword id="KW-0597">Phosphoprotein</keyword>
<keyword id="KW-0653">Protein transport</keyword>
<keyword id="KW-1185">Reference proteome</keyword>
<keyword id="KW-0677">Repeat</keyword>
<keyword id="KW-0813">Transport</keyword>
<keyword id="KW-0853">WD repeat</keyword>
<feature type="chain" id="PRO_0000050911" description="Coatomer subunit beta'">
    <location>
        <begin position="1"/>
        <end position="906"/>
    </location>
</feature>
<feature type="repeat" description="WD 1">
    <location>
        <begin position="13"/>
        <end position="52"/>
    </location>
</feature>
<feature type="repeat" description="WD 2">
    <location>
        <begin position="55"/>
        <end position="94"/>
    </location>
</feature>
<feature type="repeat" description="WD 3">
    <location>
        <begin position="97"/>
        <end position="136"/>
    </location>
</feature>
<feature type="repeat" description="WD 4">
    <location>
        <begin position="140"/>
        <end position="180"/>
    </location>
</feature>
<feature type="repeat" description="WD 5">
    <location>
        <begin position="183"/>
        <end position="224"/>
    </location>
</feature>
<feature type="repeat" description="WD 6">
    <location>
        <begin position="227"/>
        <end position="266"/>
    </location>
</feature>
<feature type="repeat" description="WD 7">
    <location>
        <begin position="350"/>
        <end position="388"/>
    </location>
</feature>
<feature type="repeat" description="WD 8">
    <location>
        <begin position="390"/>
        <end position="425"/>
    </location>
</feature>
<feature type="repeat" description="WD 9">
    <location>
        <begin position="746"/>
        <end position="783"/>
    </location>
</feature>
<feature type="region of interest" description="Disordered" evidence="4">
    <location>
        <begin position="837"/>
        <end position="872"/>
    </location>
</feature>
<feature type="coiled-coil region" evidence="3">
    <location>
        <begin position="866"/>
        <end position="891"/>
    </location>
</feature>
<feature type="modified residue" description="N6-acetyllysine" evidence="2">
    <location>
        <position position="627"/>
    </location>
</feature>
<feature type="modified residue" description="Phosphoserine" evidence="2">
    <location>
        <position position="859"/>
    </location>
</feature>
<feature type="modified residue" description="Phosphothreonine" evidence="2">
    <location>
        <position position="861"/>
    </location>
</feature>
<feature type="sequence conflict" description="In Ref. 1; CAA51285." evidence="5" ref="1">
    <original>Q</original>
    <variation>P</variation>
    <location>
        <position position="682"/>
    </location>
</feature>
<name>COPB2_BOVIN</name>
<evidence type="ECO:0000250" key="1"/>
<evidence type="ECO:0000250" key="2">
    <source>
        <dbReference type="UniProtKB" id="P35606"/>
    </source>
</evidence>
<evidence type="ECO:0000255" key="3"/>
<evidence type="ECO:0000256" key="4">
    <source>
        <dbReference type="SAM" id="MobiDB-lite"/>
    </source>
</evidence>
<evidence type="ECO:0000305" key="5"/>
<gene>
    <name type="primary">COPB2</name>
</gene>
<protein>
    <recommendedName>
        <fullName>Coatomer subunit beta'</fullName>
    </recommendedName>
    <alternativeName>
        <fullName>Beta'-coat protein</fullName>
        <shortName>Beta'-COP</shortName>
    </alternativeName>
    <alternativeName>
        <fullName>p102</fullName>
    </alternativeName>
</protein>
<proteinExistence type="evidence at protein level"/>
<comment type="function">
    <text evidence="1">The coatomer is a cytosolic protein complex that binds to dilysine motifs and reversibly associates with Golgi non-clathrin-coated vesicles, which further mediate biosynthetic protein transport from the ER, via the Golgi up to the trans Golgi network. Coatomer complex is required for budding from Golgi membranes, and is essential for the retrograde Golgi-to-ER transport of dilysine-tagged proteins. In mammals, the coatomer can only be recruited by membranes associated to ADP-ribosylation factors (ARFs), which are small GTP-binding proteins; the complex also influences the Golgi structural integrity, as well as the processing, activity, and endocytic recycling of LDL receptors (By similarity).</text>
</comment>
<comment type="function">
    <text evidence="1">This coatomer complex protein, essential for Golgi budding and vesicular trafficking, is a selective binding protein (RACK) for protein kinase C, epsilon type. It binds to Golgi membranes in a GTP-dependent manner (By similarity).</text>
</comment>
<comment type="subunit">
    <text evidence="1 2">Oligomeric complex that consists of at least the alpha, beta, beta', gamma, delta, epsilon and zeta subunits. Probably interacts with PEX11A. Interacts with SCYL1. Interacts with JAGN1 (By similarity).</text>
</comment>
<comment type="interaction">
    <interactant intactId="EBI-620411">
        <id>P35605</id>
    </interactant>
    <interactant intactId="EBI-620400">
        <id>Q27954</id>
        <label>COPA</label>
    </interactant>
    <organismsDiffer>false</organismsDiffer>
    <experiments>2</experiments>
</comment>
<comment type="subcellular location">
    <subcellularLocation>
        <location evidence="1">Cytoplasm</location>
        <location evidence="1">Cytosol</location>
    </subcellularLocation>
    <subcellularLocation>
        <location evidence="1">Golgi apparatus membrane</location>
        <topology evidence="1">Peripheral membrane protein</topology>
        <orientation evidence="1">Cytoplasmic side</orientation>
    </subcellularLocation>
    <subcellularLocation>
        <location evidence="1">Cytoplasmic vesicle</location>
        <location evidence="1">COPI-coated vesicle membrane</location>
        <topology evidence="1">Peripheral membrane protein</topology>
        <orientation evidence="1">Cytoplasmic side</orientation>
    </subcellularLocation>
    <text evidence="1">The coatomer is cytoplasmic or polymerized on the cytoplasmic side of the Golgi, as well as on the vesicles/buds originating from it. Shows only a slight preference for the cis-Golgi apparatus, compared with the trans-Golgi.</text>
</comment>
<comment type="similarity">
    <text evidence="5">Belongs to the WD repeat COPB2 family.</text>
</comment>
<sequence length="906" mass="102393">MPLRLDIKRKLTARSDRVKSVDLHPTEPWMLASLYNGSVCVWNHETQTLVKTFEVCDLPVRAAKFVARKNWVVTGADDMQIRVFNYNTLERVHMFEAHSDYIRCIAVHPTQPFILTSSDDMLIKLWDWDKKWSCSQVFEGHTHYVMQIVINPKDNNQFASASLDRTIKVWQLGSSSPNFTLEGHEKGVNCIDYYSGGDKPYLISGADDRLVKIWDYQNKTCVQTLEGHAQNVSCASFHPELPIIITGSEDGTVRIWHSSTYRLESTLNYGMERVWCVASLRGSNNVALGYDEGSIIVKLGREEPAMSMDANGKIIWAKHSEVQQANLKAMGDAEIKDGERLPLAVKDMGSCEIYPQTIQHNPNGRFVVVCGDGEYIIYTAMALRNKSFGSAQEFAWAHDSSEYAIRESNSVVKIFKNFKEKKSFKPDFGAESIYGGFLLGVRSVNGLAFYDWENTELIRRIEIQPKHIFWSDSGELVCIATEESFFILKYLSEKVLAAQETHEGVTEDGIEDGFEVLGEIQEIVKTGLWVGDCFIYTSSVNRLNYYVGGEIVTIAHLDRTMYLLGYIPKDNRLYLGDKELNIVSYSLLVSVLEYQTAVMRRDFSMADKVLPTIPKEQRTRVAHFLEKQGFKQQALTVSTDPEHRFELALQLGELKIAYQLAVEAESEQKWKQLAELAISKCQFGLAQECLHHAQDYGGLLLLATASGNASMVNKLAEGAERDGKNNVAFMSYFLQGKLDACLELLIRTGRLPEAAFLARTYLPSQVSRVVKLWRENLSKVNQKAAESLADPTEYENLFPGLKEAFVVEEWVKETHADLWPAKQYPLVTPNEERNVMEEAKGFQPSRSAAQQELDGKPASPTPVIVTSQTANKEEKSLLELEVDLDNLEIEDIDTTDINLDEDILDD</sequence>
<reference key="1">
    <citation type="journal article" date="1993" name="EMBO J.">
        <title>Beta'-COP, a novel subunit of coatomer.</title>
        <authorList>
            <person name="Stenbeck G."/>
            <person name="Harter C."/>
            <person name="Brecht A."/>
            <person name="Herrmann D."/>
            <person name="Lottspeich F."/>
            <person name="Orci L."/>
            <person name="Wieland F.T."/>
        </authorList>
    </citation>
    <scope>NUCLEOTIDE SEQUENCE [MRNA]</scope>
    <scope>PARTIAL PROTEIN SEQUENCE</scope>
</reference>
<reference key="2">
    <citation type="submission" date="2007-03" db="EMBL/GenBank/DDBJ databases">
        <authorList>
            <consortium name="NIH - Mammalian Gene Collection (MGC) project"/>
        </authorList>
    </citation>
    <scope>NUCLEOTIDE SEQUENCE [LARGE SCALE MRNA]</scope>
    <source>
        <strain>Hereford</strain>
        <tissue>Ascending colon</tissue>
    </source>
</reference>
<reference key="3">
    <citation type="journal article" date="1998" name="J. Cell Biol.">
        <title>Peroxisome biogenesis: involvement of ARF and coatomer.</title>
        <authorList>
            <person name="Passreiter M."/>
            <person name="Anton M."/>
            <person name="Lay D."/>
            <person name="Frank R."/>
            <person name="Harter C."/>
            <person name="Wieland F.T."/>
            <person name="Gorgas K."/>
            <person name="Just W.W."/>
        </authorList>
    </citation>
    <scope>INTERACTION WITH PEX11A</scope>
</reference>